<protein>
    <recommendedName>
        <fullName evidence="1">Dual-action ribosomal maturation protein DarP</fullName>
    </recommendedName>
    <alternativeName>
        <fullName evidence="1">Large ribosomal subunit assembly factor DarP</fullName>
    </alternativeName>
</protein>
<dbReference type="EMBL" id="CR555306">
    <property type="protein sequence ID" value="CAI06663.1"/>
    <property type="status" value="ALT_INIT"/>
    <property type="molecule type" value="Genomic_DNA"/>
</dbReference>
<dbReference type="RefSeq" id="WP_049780156.1">
    <property type="nucleotide sequence ID" value="NC_006513.1"/>
</dbReference>
<dbReference type="SMR" id="Q5P7P8"/>
<dbReference type="STRING" id="76114.ebA1030"/>
<dbReference type="KEGG" id="eba:ebA1030"/>
<dbReference type="eggNOG" id="COG3028">
    <property type="taxonomic scope" value="Bacteria"/>
</dbReference>
<dbReference type="HOGENOM" id="CLU_106757_1_0_4"/>
<dbReference type="OrthoDB" id="5293604at2"/>
<dbReference type="Proteomes" id="UP000006552">
    <property type="component" value="Chromosome"/>
</dbReference>
<dbReference type="GO" id="GO:0005829">
    <property type="term" value="C:cytosol"/>
    <property type="evidence" value="ECO:0007669"/>
    <property type="project" value="TreeGrafter"/>
</dbReference>
<dbReference type="GO" id="GO:0043022">
    <property type="term" value="F:ribosome binding"/>
    <property type="evidence" value="ECO:0007669"/>
    <property type="project" value="UniProtKB-UniRule"/>
</dbReference>
<dbReference type="GO" id="GO:0019843">
    <property type="term" value="F:rRNA binding"/>
    <property type="evidence" value="ECO:0007669"/>
    <property type="project" value="UniProtKB-UniRule"/>
</dbReference>
<dbReference type="GO" id="GO:1902626">
    <property type="term" value="P:assembly of large subunit precursor of preribosome"/>
    <property type="evidence" value="ECO:0007669"/>
    <property type="project" value="UniProtKB-UniRule"/>
</dbReference>
<dbReference type="CDD" id="cd16331">
    <property type="entry name" value="YjgA-like"/>
    <property type="match status" value="1"/>
</dbReference>
<dbReference type="Gene3D" id="1.10.60.30">
    <property type="entry name" value="PSPTO4464-like domains"/>
    <property type="match status" value="2"/>
</dbReference>
<dbReference type="HAMAP" id="MF_00765">
    <property type="entry name" value="DarP"/>
    <property type="match status" value="1"/>
</dbReference>
<dbReference type="InterPro" id="IPR006839">
    <property type="entry name" value="DarP"/>
</dbReference>
<dbReference type="InterPro" id="IPR023153">
    <property type="entry name" value="DarP_sf"/>
</dbReference>
<dbReference type="NCBIfam" id="NF003593">
    <property type="entry name" value="PRK05255.1-1"/>
    <property type="match status" value="1"/>
</dbReference>
<dbReference type="PANTHER" id="PTHR38101">
    <property type="entry name" value="UPF0307 PROTEIN YJGA"/>
    <property type="match status" value="1"/>
</dbReference>
<dbReference type="PANTHER" id="PTHR38101:SF1">
    <property type="entry name" value="UPF0307 PROTEIN YJGA"/>
    <property type="match status" value="1"/>
</dbReference>
<dbReference type="Pfam" id="PF04751">
    <property type="entry name" value="DarP"/>
    <property type="match status" value="1"/>
</dbReference>
<dbReference type="PIRSF" id="PIRSF016183">
    <property type="entry name" value="UCP016183"/>
    <property type="match status" value="1"/>
</dbReference>
<dbReference type="SUPFAM" id="SSF158710">
    <property type="entry name" value="PSPTO4464-like"/>
    <property type="match status" value="1"/>
</dbReference>
<evidence type="ECO:0000255" key="1">
    <source>
        <dbReference type="HAMAP-Rule" id="MF_00765"/>
    </source>
</evidence>
<evidence type="ECO:0000256" key="2">
    <source>
        <dbReference type="SAM" id="MobiDB-lite"/>
    </source>
</evidence>
<evidence type="ECO:0000305" key="3"/>
<name>DARP_AROAE</name>
<sequence length="190" mass="22098">MIHADHDDNLPDDEEGLPLPPSKSQRKRDMHALQDLGEQLVALSVDQLKKVPMPEALADAVREAKRMTKHEARRRQMQYVGKLMRHIDPEPIQAQLDVFNGLSKAEIARQHRLERLRSEVLDDEKVLQRIVETWPEADFQQLRTLRRNALKEREQNKPPRAFRELFRVLRDLDVGAAAPPADEPRDDDEE</sequence>
<feature type="chain" id="PRO_0000257621" description="Dual-action ribosomal maturation protein DarP">
    <location>
        <begin position="1"/>
        <end position="190"/>
    </location>
</feature>
<feature type="region of interest" description="Disordered" evidence="2">
    <location>
        <begin position="1"/>
        <end position="31"/>
    </location>
</feature>
<proteinExistence type="inferred from homology"/>
<organism>
    <name type="scientific">Aromatoleum aromaticum (strain DSM 19018 / LMG 30748 / EbN1)</name>
    <name type="common">Azoarcus sp. (strain EbN1)</name>
    <dbReference type="NCBI Taxonomy" id="76114"/>
    <lineage>
        <taxon>Bacteria</taxon>
        <taxon>Pseudomonadati</taxon>
        <taxon>Pseudomonadota</taxon>
        <taxon>Betaproteobacteria</taxon>
        <taxon>Rhodocyclales</taxon>
        <taxon>Rhodocyclaceae</taxon>
        <taxon>Aromatoleum</taxon>
    </lineage>
</organism>
<comment type="function">
    <text evidence="1">Member of a network of 50S ribosomal subunit biogenesis factors which assembles along the 30S-50S interface, preventing incorrect 23S rRNA structures from forming. Promotes peptidyl transferase center (PTC) maturation.</text>
</comment>
<comment type="subcellular location">
    <subcellularLocation>
        <location evidence="1">Cytoplasm</location>
    </subcellularLocation>
    <text evidence="1">Associates with late stage pre-50S ribosomal subunits.</text>
</comment>
<comment type="similarity">
    <text evidence="1">Belongs to the DarP family.</text>
</comment>
<comment type="sequence caution" evidence="3">
    <conflict type="erroneous initiation">
        <sequence resource="EMBL-CDS" id="CAI06663"/>
    </conflict>
    <text>Extended N-terminus.</text>
</comment>
<accession>Q5P7P8</accession>
<keyword id="KW-0963">Cytoplasm</keyword>
<keyword id="KW-1185">Reference proteome</keyword>
<keyword id="KW-0690">Ribosome biogenesis</keyword>
<keyword id="KW-0694">RNA-binding</keyword>
<keyword id="KW-0699">rRNA-binding</keyword>
<reference key="1">
    <citation type="journal article" date="2005" name="Arch. Microbiol.">
        <title>The genome sequence of an anaerobic aromatic-degrading denitrifying bacterium, strain EbN1.</title>
        <authorList>
            <person name="Rabus R."/>
            <person name="Kube M."/>
            <person name="Heider J."/>
            <person name="Beck A."/>
            <person name="Heitmann K."/>
            <person name="Widdel F."/>
            <person name="Reinhardt R."/>
        </authorList>
    </citation>
    <scope>NUCLEOTIDE SEQUENCE [LARGE SCALE GENOMIC DNA]</scope>
    <source>
        <strain>DSM 19018 / LMG 30748 / EbN1</strain>
    </source>
</reference>
<gene>
    <name evidence="1" type="primary">darP</name>
    <name type="ordered locus">AZOSEA05410</name>
    <name type="ORF">ebA1030</name>
</gene>